<proteinExistence type="uncertain"/>
<gene>
    <name type="ordered locus">YNL067W-A</name>
    <name type="ORF">YNL067W-B</name>
</gene>
<organism>
    <name type="scientific">Saccharomyces cerevisiae (strain ATCC 204508 / S288c)</name>
    <name type="common">Baker's yeast</name>
    <dbReference type="NCBI Taxonomy" id="559292"/>
    <lineage>
        <taxon>Eukaryota</taxon>
        <taxon>Fungi</taxon>
        <taxon>Dikarya</taxon>
        <taxon>Ascomycota</taxon>
        <taxon>Saccharomycotina</taxon>
        <taxon>Saccharomycetes</taxon>
        <taxon>Saccharomycetales</taxon>
        <taxon>Saccharomycetaceae</taxon>
        <taxon>Saccharomyces</taxon>
    </lineage>
</organism>
<reference key="1">
    <citation type="journal article" date="1995" name="Yeast">
        <title>The sequence of a 44 420 bp fragment located on the left arm of chromosome XIV from Saccharomyces cerevisiae.</title>
        <authorList>
            <person name="Bergez P."/>
            <person name="Doignon F."/>
            <person name="Crouzet M."/>
        </authorList>
    </citation>
    <scope>NUCLEOTIDE SEQUENCE [GENOMIC DNA]</scope>
    <source>
        <strain>S288c / FY1676</strain>
    </source>
</reference>
<reference key="2">
    <citation type="journal article" date="1996" name="Yeast">
        <title>Sequencing a cosmid clone of Saccharomyces cerevisiae chromosome XIV reveals 12 new open reading frames (ORFs) and an ancient duplication of six ORFs.</title>
        <authorList>
            <person name="Poehlmann R."/>
            <person name="Philippsen P."/>
        </authorList>
    </citation>
    <scope>NUCLEOTIDE SEQUENCE [GENOMIC DNA]</scope>
    <source>
        <strain>ATCC 96604 / S288c / FY1679</strain>
    </source>
</reference>
<reference key="3">
    <citation type="journal article" date="1997" name="Nature">
        <title>The nucleotide sequence of Saccharomyces cerevisiae chromosome XIV and its evolutionary implications.</title>
        <authorList>
            <person name="Philippsen P."/>
            <person name="Kleine K."/>
            <person name="Poehlmann R."/>
            <person name="Duesterhoeft A."/>
            <person name="Hamberg K."/>
            <person name="Hegemann J.H."/>
            <person name="Obermaier B."/>
            <person name="Urrestarazu L.A."/>
            <person name="Aert R."/>
            <person name="Albermann K."/>
            <person name="Altmann R."/>
            <person name="Andre B."/>
            <person name="Baladron V."/>
            <person name="Ballesta J.P.G."/>
            <person name="Becam A.-M."/>
            <person name="Beinhauer J.D."/>
            <person name="Boskovic J."/>
            <person name="Buitrago M.J."/>
            <person name="Bussereau F."/>
            <person name="Coster F."/>
            <person name="Crouzet M."/>
            <person name="D'Angelo M."/>
            <person name="Dal Pero F."/>
            <person name="De Antoni A."/>
            <person name="del Rey F."/>
            <person name="Doignon F."/>
            <person name="Domdey H."/>
            <person name="Dubois E."/>
            <person name="Fiedler T.A."/>
            <person name="Fleig U."/>
            <person name="Floeth M."/>
            <person name="Fritz C."/>
            <person name="Gaillardin C."/>
            <person name="Garcia-Cantalejo J.M."/>
            <person name="Glansdorff N."/>
            <person name="Goffeau A."/>
            <person name="Gueldener U."/>
            <person name="Herbert C.J."/>
            <person name="Heumann K."/>
            <person name="Heuss-Neitzel D."/>
            <person name="Hilbert H."/>
            <person name="Hinni K."/>
            <person name="Iraqui Houssaini I."/>
            <person name="Jacquet M."/>
            <person name="Jimenez A."/>
            <person name="Jonniaux J.-L."/>
            <person name="Karpfinger-Hartl L."/>
            <person name="Lanfranchi G."/>
            <person name="Lepingle A."/>
            <person name="Levesque H."/>
            <person name="Lyck R."/>
            <person name="Maftahi M."/>
            <person name="Mallet L."/>
            <person name="Maurer C.T.C."/>
            <person name="Messenguy F."/>
            <person name="Mewes H.-W."/>
            <person name="Moestl D."/>
            <person name="Nasr F."/>
            <person name="Nicaud J.-M."/>
            <person name="Niedenthal R.K."/>
            <person name="Pandolfo D."/>
            <person name="Pierard A."/>
            <person name="Piravandi E."/>
            <person name="Planta R.J."/>
            <person name="Pohl T.M."/>
            <person name="Purnelle B."/>
            <person name="Rebischung C."/>
            <person name="Remacha M.A."/>
            <person name="Revuelta J.L."/>
            <person name="Rinke M."/>
            <person name="Saiz J.E."/>
            <person name="Sartorello F."/>
            <person name="Scherens B."/>
            <person name="Sen-Gupta M."/>
            <person name="Soler-Mira A."/>
            <person name="Urbanus J.H.M."/>
            <person name="Valle G."/>
            <person name="Van Dyck L."/>
            <person name="Verhasselt P."/>
            <person name="Vierendeels F."/>
            <person name="Vissers S."/>
            <person name="Voet M."/>
            <person name="Volckaert G."/>
            <person name="Wach A."/>
            <person name="Wambutt R."/>
            <person name="Wedler H."/>
            <person name="Zollner A."/>
            <person name="Hani J."/>
        </authorList>
    </citation>
    <scope>NUCLEOTIDE SEQUENCE [LARGE SCALE GENOMIC DNA]</scope>
    <source>
        <strain>ATCC 204508 / S288c</strain>
    </source>
</reference>
<reference key="4">
    <citation type="journal article" date="2014" name="G3 (Bethesda)">
        <title>The reference genome sequence of Saccharomyces cerevisiae: Then and now.</title>
        <authorList>
            <person name="Engel S.R."/>
            <person name="Dietrich F.S."/>
            <person name="Fisk D.G."/>
            <person name="Binkley G."/>
            <person name="Balakrishnan R."/>
            <person name="Costanzo M.C."/>
            <person name="Dwight S.S."/>
            <person name="Hitz B.C."/>
            <person name="Karra K."/>
            <person name="Nash R.S."/>
            <person name="Weng S."/>
            <person name="Wong E.D."/>
            <person name="Lloyd P."/>
            <person name="Skrzypek M.S."/>
            <person name="Miyasato S.R."/>
            <person name="Simison M."/>
            <person name="Cherry J.M."/>
        </authorList>
    </citation>
    <scope>GENOME REANNOTATION</scope>
    <source>
        <strain>ATCC 204508 / S288c</strain>
    </source>
</reference>
<reference key="5">
    <citation type="journal article" date="2000" name="FEBS Lett.">
        <title>Genomic exploration of the hemiascomycetous yeasts: 4. The genome of Saccharomyces cerevisiae revisited.</title>
        <authorList>
            <person name="Blandin G."/>
            <person name="Durrens P."/>
            <person name="Tekaia F."/>
            <person name="Aigle M."/>
            <person name="Bolotin-Fukuhara M."/>
            <person name="Bon E."/>
            <person name="Casaregola S."/>
            <person name="de Montigny J."/>
            <person name="Gaillardin C."/>
            <person name="Lepingle A."/>
            <person name="Llorente B."/>
            <person name="Malpertuy A."/>
            <person name="Neuveglise C."/>
            <person name="Ozier-Kalogeropoulos O."/>
            <person name="Perrin A."/>
            <person name="Potier S."/>
            <person name="Souciet J.-L."/>
            <person name="Talla E."/>
            <person name="Toffano-Nioche C."/>
            <person name="Wesolowski-Louvel M."/>
            <person name="Marck C."/>
            <person name="Dujon B."/>
        </authorList>
    </citation>
    <scope>GENOME REANNOTATION</scope>
</reference>
<accession>P0C5Q8</accession>
<name>YN67A_YEAST</name>
<protein>
    <recommendedName>
        <fullName>Putative uncharacterized protein YNL067W-A</fullName>
    </recommendedName>
</protein>
<feature type="chain" id="PRO_0000309056" description="Putative uncharacterized protein YNL067W-A">
    <location>
        <begin position="1"/>
        <end position="48"/>
    </location>
</feature>
<sequence>MSLFCLPLEMRNHWHFFSLFTNLPRKSKWHRASEFFFPLLMSEIEDFR</sequence>
<dbReference type="EMBL" id="U12141">
    <property type="status" value="NOT_ANNOTATED_CDS"/>
    <property type="molecule type" value="Genomic_DNA"/>
</dbReference>
<dbReference type="EMBL" id="X86470">
    <property type="status" value="NOT_ANNOTATED_CDS"/>
    <property type="molecule type" value="Genomic_DNA"/>
</dbReference>
<dbReference type="EMBL" id="Z71343">
    <property type="status" value="NOT_ANNOTATED_CDS"/>
    <property type="molecule type" value="Genomic_DNA"/>
</dbReference>
<dbReference type="EMBL" id="Z71344">
    <property type="status" value="NOT_ANNOTATED_CDS"/>
    <property type="molecule type" value="Genomic_DNA"/>
</dbReference>
<dbReference type="STRING" id="4932.YNL067W-A"/>
<dbReference type="PaxDb" id="4932-YNL067W-A"/>
<dbReference type="EnsemblFungi" id="YNL067W-A_mRNA">
    <property type="protein sequence ID" value="YNL067W-A"/>
    <property type="gene ID" value="YNL067W-A"/>
</dbReference>
<dbReference type="AGR" id="SGD:S000007623"/>
<dbReference type="SGD" id="S000007623">
    <property type="gene designation" value="YNL067W-A"/>
</dbReference>
<dbReference type="HOGENOM" id="CLU_3160241_0_0_1"/>
<comment type="caution">
    <text evidence="1">Product of a dubious gene prediction unlikely to encode a functional protein. Because of that it is not part of the S.cerevisiae S288c complete/reference proteome set.</text>
</comment>
<evidence type="ECO:0000305" key="1">
    <source>
    </source>
</evidence>